<dbReference type="EC" id="7.3.2.2" evidence="1"/>
<dbReference type="EMBL" id="AE014075">
    <property type="protein sequence ID" value="AAN83535.1"/>
    <property type="molecule type" value="Genomic_DNA"/>
</dbReference>
<dbReference type="RefSeq" id="WP_001193412.1">
    <property type="nucleotide sequence ID" value="NZ_CP051263.1"/>
</dbReference>
<dbReference type="SMR" id="Q8FAV1"/>
<dbReference type="STRING" id="199310.c5111"/>
<dbReference type="KEGG" id="ecc:c5111"/>
<dbReference type="eggNOG" id="COG3638">
    <property type="taxonomic scope" value="Bacteria"/>
</dbReference>
<dbReference type="HOGENOM" id="CLU_000604_1_22_6"/>
<dbReference type="BioCyc" id="ECOL199310:C5111-MONOMER"/>
<dbReference type="Proteomes" id="UP000001410">
    <property type="component" value="Chromosome"/>
</dbReference>
<dbReference type="GO" id="GO:0005886">
    <property type="term" value="C:plasma membrane"/>
    <property type="evidence" value="ECO:0007669"/>
    <property type="project" value="UniProtKB-SubCell"/>
</dbReference>
<dbReference type="GO" id="GO:0015416">
    <property type="term" value="F:ABC-type phosphonate transporter activity"/>
    <property type="evidence" value="ECO:0007669"/>
    <property type="project" value="UniProtKB-EC"/>
</dbReference>
<dbReference type="GO" id="GO:0005524">
    <property type="term" value="F:ATP binding"/>
    <property type="evidence" value="ECO:0007669"/>
    <property type="project" value="UniProtKB-KW"/>
</dbReference>
<dbReference type="GO" id="GO:0016887">
    <property type="term" value="F:ATP hydrolysis activity"/>
    <property type="evidence" value="ECO:0007669"/>
    <property type="project" value="InterPro"/>
</dbReference>
<dbReference type="CDD" id="cd03256">
    <property type="entry name" value="ABC_PhnC_transporter"/>
    <property type="match status" value="1"/>
</dbReference>
<dbReference type="Gene3D" id="3.40.50.300">
    <property type="entry name" value="P-loop containing nucleotide triphosphate hydrolases"/>
    <property type="match status" value="1"/>
</dbReference>
<dbReference type="InterPro" id="IPR003593">
    <property type="entry name" value="AAA+_ATPase"/>
</dbReference>
<dbReference type="InterPro" id="IPR003439">
    <property type="entry name" value="ABC_transporter-like_ATP-bd"/>
</dbReference>
<dbReference type="InterPro" id="IPR017871">
    <property type="entry name" value="ABC_transporter-like_CS"/>
</dbReference>
<dbReference type="InterPro" id="IPR012693">
    <property type="entry name" value="ABC_transpr_PhnC"/>
</dbReference>
<dbReference type="InterPro" id="IPR050086">
    <property type="entry name" value="MetN_ABC_transporter-like"/>
</dbReference>
<dbReference type="InterPro" id="IPR027417">
    <property type="entry name" value="P-loop_NTPase"/>
</dbReference>
<dbReference type="NCBIfam" id="TIGR02315">
    <property type="entry name" value="ABC_phnC"/>
    <property type="match status" value="1"/>
</dbReference>
<dbReference type="NCBIfam" id="NF007438">
    <property type="entry name" value="PRK09984.1"/>
    <property type="match status" value="1"/>
</dbReference>
<dbReference type="PANTHER" id="PTHR43166">
    <property type="entry name" value="AMINO ACID IMPORT ATP-BINDING PROTEIN"/>
    <property type="match status" value="1"/>
</dbReference>
<dbReference type="PANTHER" id="PTHR43166:SF6">
    <property type="entry name" value="PHOSPHONATES IMPORT ATP-BINDING PROTEIN PHNC"/>
    <property type="match status" value="1"/>
</dbReference>
<dbReference type="Pfam" id="PF00005">
    <property type="entry name" value="ABC_tran"/>
    <property type="match status" value="1"/>
</dbReference>
<dbReference type="SMART" id="SM00382">
    <property type="entry name" value="AAA"/>
    <property type="match status" value="1"/>
</dbReference>
<dbReference type="SUPFAM" id="SSF52540">
    <property type="entry name" value="P-loop containing nucleoside triphosphate hydrolases"/>
    <property type="match status" value="1"/>
</dbReference>
<dbReference type="PROSITE" id="PS00211">
    <property type="entry name" value="ABC_TRANSPORTER_1"/>
    <property type="match status" value="1"/>
</dbReference>
<dbReference type="PROSITE" id="PS50893">
    <property type="entry name" value="ABC_TRANSPORTER_2"/>
    <property type="match status" value="1"/>
</dbReference>
<dbReference type="PROSITE" id="PS51249">
    <property type="entry name" value="PHNC"/>
    <property type="match status" value="1"/>
</dbReference>
<accession>Q8FAV1</accession>
<name>PHNC_ECOL6</name>
<keyword id="KW-0067">ATP-binding</keyword>
<keyword id="KW-0997">Cell inner membrane</keyword>
<keyword id="KW-1003">Cell membrane</keyword>
<keyword id="KW-0472">Membrane</keyword>
<keyword id="KW-0547">Nucleotide-binding</keyword>
<keyword id="KW-0918">Phosphonate transport</keyword>
<keyword id="KW-1185">Reference proteome</keyword>
<keyword id="KW-1278">Translocase</keyword>
<keyword id="KW-0813">Transport</keyword>
<evidence type="ECO:0000255" key="1">
    <source>
        <dbReference type="HAMAP-Rule" id="MF_01713"/>
    </source>
</evidence>
<organism>
    <name type="scientific">Escherichia coli O6:H1 (strain CFT073 / ATCC 700928 / UPEC)</name>
    <dbReference type="NCBI Taxonomy" id="199310"/>
    <lineage>
        <taxon>Bacteria</taxon>
        <taxon>Pseudomonadati</taxon>
        <taxon>Pseudomonadota</taxon>
        <taxon>Gammaproteobacteria</taxon>
        <taxon>Enterobacterales</taxon>
        <taxon>Enterobacteriaceae</taxon>
        <taxon>Escherichia</taxon>
    </lineage>
</organism>
<proteinExistence type="inferred from homology"/>
<gene>
    <name evidence="1" type="primary">phnC</name>
    <name type="ordered locus">c5111</name>
</gene>
<sequence>MQTIIRVEKLAKTFNQHQALHAVDLNIHHGEMVALLGPSGSGKSTLLRHLSGLITGDKSVGSHIELLGRTVQREGRLARDIRKSRAHTGYIFQQFNLVNRLSVLENVLIGALGSTPFWRTCFSYFTREQKQRALQALTRVGMVHFAHQRVSTLSGGQQQRVAIARALMQQAKVILADEPIASLDPESARIVMDTLRDINQNDGITVVVTLHQVDYALRYCERIVALRQGHVFYDGCSQLFDNERFDHLYRSINRVEENAKAA</sequence>
<feature type="chain" id="PRO_0000092708" description="Phosphonates import ATP-binding protein PhnC">
    <location>
        <begin position="1"/>
        <end position="262"/>
    </location>
</feature>
<feature type="domain" description="ABC transporter" evidence="1">
    <location>
        <begin position="5"/>
        <end position="253"/>
    </location>
</feature>
<feature type="binding site" evidence="1">
    <location>
        <begin position="37"/>
        <end position="44"/>
    </location>
    <ligand>
        <name>ATP</name>
        <dbReference type="ChEBI" id="CHEBI:30616"/>
    </ligand>
</feature>
<protein>
    <recommendedName>
        <fullName evidence="1">Phosphonates import ATP-binding protein PhnC</fullName>
        <ecNumber evidence="1">7.3.2.2</ecNumber>
    </recommendedName>
</protein>
<comment type="function">
    <text evidence="1">Part of the ABC transporter complex PhnCDE involved in phosphonates import. Responsible for energy coupling to the transport system.</text>
</comment>
<comment type="catalytic activity">
    <reaction evidence="1">
        <text>phosphonate(out) + ATP + H2O = phosphonate(in) + ADP + phosphate + H(+)</text>
        <dbReference type="Rhea" id="RHEA:18065"/>
        <dbReference type="ChEBI" id="CHEBI:15377"/>
        <dbReference type="ChEBI" id="CHEBI:15378"/>
        <dbReference type="ChEBI" id="CHEBI:16215"/>
        <dbReference type="ChEBI" id="CHEBI:30616"/>
        <dbReference type="ChEBI" id="CHEBI:43474"/>
        <dbReference type="ChEBI" id="CHEBI:456216"/>
        <dbReference type="EC" id="7.3.2.2"/>
    </reaction>
</comment>
<comment type="subunit">
    <text evidence="1">The complex is composed of two ATP-binding proteins (PhnC), two transmembrane proteins (PhnE) and a solute-binding protein (PhnD).</text>
</comment>
<comment type="subcellular location">
    <subcellularLocation>
        <location evidence="1">Cell inner membrane</location>
        <topology evidence="1">Peripheral membrane protein</topology>
    </subcellularLocation>
</comment>
<comment type="similarity">
    <text evidence="1">Belongs to the ABC transporter superfamily. Phosphonates importer (TC 3.A.1.9.1) family.</text>
</comment>
<reference key="1">
    <citation type="journal article" date="2002" name="Proc. Natl. Acad. Sci. U.S.A.">
        <title>Extensive mosaic structure revealed by the complete genome sequence of uropathogenic Escherichia coli.</title>
        <authorList>
            <person name="Welch R.A."/>
            <person name="Burland V."/>
            <person name="Plunkett G. III"/>
            <person name="Redford P."/>
            <person name="Roesch P."/>
            <person name="Rasko D."/>
            <person name="Buckles E.L."/>
            <person name="Liou S.-R."/>
            <person name="Boutin A."/>
            <person name="Hackett J."/>
            <person name="Stroud D."/>
            <person name="Mayhew G.F."/>
            <person name="Rose D.J."/>
            <person name="Zhou S."/>
            <person name="Schwartz D.C."/>
            <person name="Perna N.T."/>
            <person name="Mobley H.L.T."/>
            <person name="Donnenberg M.S."/>
            <person name="Blattner F.R."/>
        </authorList>
    </citation>
    <scope>NUCLEOTIDE SEQUENCE [LARGE SCALE GENOMIC DNA]</scope>
    <source>
        <strain>CFT073 / ATCC 700928 / UPEC</strain>
    </source>
</reference>